<dbReference type="EMBL" id="CP000688">
    <property type="protein sequence ID" value="ABQ17040.1"/>
    <property type="molecule type" value="Genomic_DNA"/>
</dbReference>
<dbReference type="SMR" id="A5FRX9"/>
<dbReference type="KEGG" id="deb:DehaBAV1_0455"/>
<dbReference type="PATRIC" id="fig|216389.18.peg.498"/>
<dbReference type="HOGENOM" id="CLU_144911_0_1_0"/>
<dbReference type="GO" id="GO:0005737">
    <property type="term" value="C:cytoplasm"/>
    <property type="evidence" value="ECO:0007669"/>
    <property type="project" value="UniProtKB-ARBA"/>
</dbReference>
<dbReference type="GO" id="GO:0015935">
    <property type="term" value="C:small ribosomal subunit"/>
    <property type="evidence" value="ECO:0007669"/>
    <property type="project" value="InterPro"/>
</dbReference>
<dbReference type="GO" id="GO:0019843">
    <property type="term" value="F:rRNA binding"/>
    <property type="evidence" value="ECO:0007669"/>
    <property type="project" value="UniProtKB-UniRule"/>
</dbReference>
<dbReference type="GO" id="GO:0003735">
    <property type="term" value="F:structural constituent of ribosome"/>
    <property type="evidence" value="ECO:0007669"/>
    <property type="project" value="InterPro"/>
</dbReference>
<dbReference type="GO" id="GO:0000028">
    <property type="term" value="P:ribosomal small subunit assembly"/>
    <property type="evidence" value="ECO:0007669"/>
    <property type="project" value="TreeGrafter"/>
</dbReference>
<dbReference type="GO" id="GO:0006412">
    <property type="term" value="P:translation"/>
    <property type="evidence" value="ECO:0007669"/>
    <property type="project" value="UniProtKB-UniRule"/>
</dbReference>
<dbReference type="FunFam" id="3.30.860.10:FF:000001">
    <property type="entry name" value="30S ribosomal protein S19"/>
    <property type="match status" value="1"/>
</dbReference>
<dbReference type="Gene3D" id="3.30.860.10">
    <property type="entry name" value="30s Ribosomal Protein S19, Chain A"/>
    <property type="match status" value="1"/>
</dbReference>
<dbReference type="HAMAP" id="MF_00531">
    <property type="entry name" value="Ribosomal_uS19"/>
    <property type="match status" value="1"/>
</dbReference>
<dbReference type="InterPro" id="IPR002222">
    <property type="entry name" value="Ribosomal_uS19"/>
</dbReference>
<dbReference type="InterPro" id="IPR005732">
    <property type="entry name" value="Ribosomal_uS19_bac-type"/>
</dbReference>
<dbReference type="InterPro" id="IPR020934">
    <property type="entry name" value="Ribosomal_uS19_CS"/>
</dbReference>
<dbReference type="InterPro" id="IPR023575">
    <property type="entry name" value="Ribosomal_uS19_SF"/>
</dbReference>
<dbReference type="NCBIfam" id="TIGR01050">
    <property type="entry name" value="rpsS_bact"/>
    <property type="match status" value="1"/>
</dbReference>
<dbReference type="PANTHER" id="PTHR11880">
    <property type="entry name" value="RIBOSOMAL PROTEIN S19P FAMILY MEMBER"/>
    <property type="match status" value="1"/>
</dbReference>
<dbReference type="PANTHER" id="PTHR11880:SF8">
    <property type="entry name" value="SMALL RIBOSOMAL SUBUNIT PROTEIN US19M"/>
    <property type="match status" value="1"/>
</dbReference>
<dbReference type="Pfam" id="PF00203">
    <property type="entry name" value="Ribosomal_S19"/>
    <property type="match status" value="1"/>
</dbReference>
<dbReference type="PIRSF" id="PIRSF002144">
    <property type="entry name" value="Ribosomal_S19"/>
    <property type="match status" value="1"/>
</dbReference>
<dbReference type="PRINTS" id="PR00975">
    <property type="entry name" value="RIBOSOMALS19"/>
</dbReference>
<dbReference type="SUPFAM" id="SSF54570">
    <property type="entry name" value="Ribosomal protein S19"/>
    <property type="match status" value="1"/>
</dbReference>
<dbReference type="PROSITE" id="PS00323">
    <property type="entry name" value="RIBOSOMAL_S19"/>
    <property type="match status" value="1"/>
</dbReference>
<reference key="1">
    <citation type="submission" date="2007-05" db="EMBL/GenBank/DDBJ databases">
        <title>Complete sequence of Dehalococcoides sp. BAV1.</title>
        <authorList>
            <consortium name="US DOE Joint Genome Institute"/>
            <person name="Copeland A."/>
            <person name="Lucas S."/>
            <person name="Lapidus A."/>
            <person name="Barry K."/>
            <person name="Detter J.C."/>
            <person name="Glavina del Rio T."/>
            <person name="Hammon N."/>
            <person name="Israni S."/>
            <person name="Pitluck S."/>
            <person name="Lowry S."/>
            <person name="Clum A."/>
            <person name="Schmutz J."/>
            <person name="Larimer F."/>
            <person name="Land M."/>
            <person name="Hauser L."/>
            <person name="Kyrpides N."/>
            <person name="Kim E."/>
            <person name="Ritalahti K.M."/>
            <person name="Loeffler F."/>
            <person name="Richardson P."/>
        </authorList>
    </citation>
    <scope>NUCLEOTIDE SEQUENCE [LARGE SCALE GENOMIC DNA]</scope>
    <source>
        <strain>ATCC BAA-2100 / JCM 16839 / KCTC 5957 / BAV1</strain>
    </source>
</reference>
<sequence>MSRSVKKGPALCPKLMKKVEVASATNQKSIIKTWARWSTITPLMVGLNVGVHDGRRHVPIYITENMVGHKLGEFTTTRNFRGHAKAEKVSQVK</sequence>
<proteinExistence type="inferred from homology"/>
<organism>
    <name type="scientific">Dehalococcoides mccartyi (strain ATCC BAA-2100 / JCM 16839 / KCTC 5957 / BAV1)</name>
    <dbReference type="NCBI Taxonomy" id="216389"/>
    <lineage>
        <taxon>Bacteria</taxon>
        <taxon>Bacillati</taxon>
        <taxon>Chloroflexota</taxon>
        <taxon>Dehalococcoidia</taxon>
        <taxon>Dehalococcoidales</taxon>
        <taxon>Dehalococcoidaceae</taxon>
        <taxon>Dehalococcoides</taxon>
    </lineage>
</organism>
<keyword id="KW-0687">Ribonucleoprotein</keyword>
<keyword id="KW-0689">Ribosomal protein</keyword>
<keyword id="KW-0694">RNA-binding</keyword>
<keyword id="KW-0699">rRNA-binding</keyword>
<comment type="function">
    <text evidence="1">Protein S19 forms a complex with S13 that binds strongly to the 16S ribosomal RNA.</text>
</comment>
<comment type="similarity">
    <text evidence="1">Belongs to the universal ribosomal protein uS19 family.</text>
</comment>
<evidence type="ECO:0000255" key="1">
    <source>
        <dbReference type="HAMAP-Rule" id="MF_00531"/>
    </source>
</evidence>
<evidence type="ECO:0000305" key="2"/>
<accession>A5FRX9</accession>
<name>RS19_DEHMB</name>
<feature type="chain" id="PRO_1000081768" description="Small ribosomal subunit protein uS19">
    <location>
        <begin position="1"/>
        <end position="93"/>
    </location>
</feature>
<gene>
    <name evidence="1" type="primary">rpsS</name>
    <name type="ordered locus">DehaBAV1_0455</name>
</gene>
<protein>
    <recommendedName>
        <fullName evidence="1">Small ribosomal subunit protein uS19</fullName>
    </recommendedName>
    <alternativeName>
        <fullName evidence="2">30S ribosomal protein S19</fullName>
    </alternativeName>
</protein>